<gene>
    <name evidence="1" type="primary">purC</name>
    <name type="ordered locus">Cvib_0763</name>
</gene>
<feature type="chain" id="PRO_1000076461" description="Phosphoribosylaminoimidazole-succinocarboxamide synthase">
    <location>
        <begin position="1"/>
        <end position="238"/>
    </location>
</feature>
<reference key="1">
    <citation type="submission" date="2007-03" db="EMBL/GenBank/DDBJ databases">
        <title>Complete sequence of Prosthecochloris vibrioformis DSM 265.</title>
        <authorList>
            <consortium name="US DOE Joint Genome Institute"/>
            <person name="Copeland A."/>
            <person name="Lucas S."/>
            <person name="Lapidus A."/>
            <person name="Barry K."/>
            <person name="Detter J.C."/>
            <person name="Glavina del Rio T."/>
            <person name="Hammon N."/>
            <person name="Israni S."/>
            <person name="Pitluck S."/>
            <person name="Schmutz J."/>
            <person name="Larimer F."/>
            <person name="Land M."/>
            <person name="Hauser L."/>
            <person name="Mikhailova N."/>
            <person name="Li T."/>
            <person name="Overmann J."/>
            <person name="Schuster S.C."/>
            <person name="Bryant D.A."/>
            <person name="Richardson P."/>
        </authorList>
    </citation>
    <scope>NUCLEOTIDE SEQUENCE [LARGE SCALE GENOMIC DNA]</scope>
    <source>
        <strain>DSM 265 / 1930</strain>
    </source>
</reference>
<organism>
    <name type="scientific">Chlorobium phaeovibrioides (strain DSM 265 / 1930)</name>
    <name type="common">Prosthecochloris vibrioformis (strain DSM 265)</name>
    <dbReference type="NCBI Taxonomy" id="290318"/>
    <lineage>
        <taxon>Bacteria</taxon>
        <taxon>Pseudomonadati</taxon>
        <taxon>Chlorobiota</taxon>
        <taxon>Chlorobiia</taxon>
        <taxon>Chlorobiales</taxon>
        <taxon>Chlorobiaceae</taxon>
        <taxon>Chlorobium/Pelodictyon group</taxon>
        <taxon>Chlorobium</taxon>
    </lineage>
</organism>
<keyword id="KW-0067">ATP-binding</keyword>
<keyword id="KW-0436">Ligase</keyword>
<keyword id="KW-0547">Nucleotide-binding</keyword>
<keyword id="KW-0658">Purine biosynthesis</keyword>
<protein>
    <recommendedName>
        <fullName evidence="1">Phosphoribosylaminoimidazole-succinocarboxamide synthase</fullName>
        <ecNumber evidence="1">6.3.2.6</ecNumber>
    </recommendedName>
    <alternativeName>
        <fullName evidence="1">SAICAR synthetase</fullName>
    </alternativeName>
</protein>
<evidence type="ECO:0000255" key="1">
    <source>
        <dbReference type="HAMAP-Rule" id="MF_00137"/>
    </source>
</evidence>
<comment type="catalytic activity">
    <reaction evidence="1">
        <text>5-amino-1-(5-phospho-D-ribosyl)imidazole-4-carboxylate + L-aspartate + ATP = (2S)-2-[5-amino-1-(5-phospho-beta-D-ribosyl)imidazole-4-carboxamido]succinate + ADP + phosphate + 2 H(+)</text>
        <dbReference type="Rhea" id="RHEA:22628"/>
        <dbReference type="ChEBI" id="CHEBI:15378"/>
        <dbReference type="ChEBI" id="CHEBI:29991"/>
        <dbReference type="ChEBI" id="CHEBI:30616"/>
        <dbReference type="ChEBI" id="CHEBI:43474"/>
        <dbReference type="ChEBI" id="CHEBI:58443"/>
        <dbReference type="ChEBI" id="CHEBI:77657"/>
        <dbReference type="ChEBI" id="CHEBI:456216"/>
        <dbReference type="EC" id="6.3.2.6"/>
    </reaction>
</comment>
<comment type="pathway">
    <text evidence="1">Purine metabolism; IMP biosynthesis via de novo pathway; 5-amino-1-(5-phospho-D-ribosyl)imidazole-4-carboxamide from 5-amino-1-(5-phospho-D-ribosyl)imidazole-4-carboxylate: step 1/2.</text>
</comment>
<comment type="similarity">
    <text evidence="1">Belongs to the SAICAR synthetase family.</text>
</comment>
<accession>A4SE69</accession>
<name>PUR7_CHLPM</name>
<sequence length="238" mass="27097">MIMNKTTLLHEGKAKKVFLTDDADLVIQEFKDDATAFNNKKKGSIADKGVVNNAISCRLFTMLEEHGVNTHLVEKLSDRDMLCRRLDIIKVEVVVRNIAAGSLVRRYGFTEGTVLARPIVEFYLKDDDLDDPLMIAEHAVALGVATMDELEVLKSRAGAINDVLKKFFADRRLKLVDFKLEFGRHKGEILLGDEISPDTCRFWDLDTDEKMDKDRFRFDLGGVEDAYTEVQRRVLELD</sequence>
<dbReference type="EC" id="6.3.2.6" evidence="1"/>
<dbReference type="EMBL" id="CP000607">
    <property type="protein sequence ID" value="ABP36778.1"/>
    <property type="molecule type" value="Genomic_DNA"/>
</dbReference>
<dbReference type="SMR" id="A4SE69"/>
<dbReference type="STRING" id="290318.Cvib_0763"/>
<dbReference type="KEGG" id="pvi:Cvib_0763"/>
<dbReference type="eggNOG" id="COG0152">
    <property type="taxonomic scope" value="Bacteria"/>
</dbReference>
<dbReference type="HOGENOM" id="CLU_061495_2_0_10"/>
<dbReference type="UniPathway" id="UPA00074">
    <property type="reaction ID" value="UER00131"/>
</dbReference>
<dbReference type="GO" id="GO:0005524">
    <property type="term" value="F:ATP binding"/>
    <property type="evidence" value="ECO:0007669"/>
    <property type="project" value="UniProtKB-KW"/>
</dbReference>
<dbReference type="GO" id="GO:0004639">
    <property type="term" value="F:phosphoribosylaminoimidazolesuccinocarboxamide synthase activity"/>
    <property type="evidence" value="ECO:0007669"/>
    <property type="project" value="UniProtKB-UniRule"/>
</dbReference>
<dbReference type="GO" id="GO:0006189">
    <property type="term" value="P:'de novo' IMP biosynthetic process"/>
    <property type="evidence" value="ECO:0007669"/>
    <property type="project" value="UniProtKB-UniRule"/>
</dbReference>
<dbReference type="GO" id="GO:0009236">
    <property type="term" value="P:cobalamin biosynthetic process"/>
    <property type="evidence" value="ECO:0007669"/>
    <property type="project" value="InterPro"/>
</dbReference>
<dbReference type="CDD" id="cd01415">
    <property type="entry name" value="SAICAR_synt_PurC"/>
    <property type="match status" value="1"/>
</dbReference>
<dbReference type="FunFam" id="3.30.470.20:FF:000006">
    <property type="entry name" value="Phosphoribosylaminoimidazole-succinocarboxamide synthase"/>
    <property type="match status" value="1"/>
</dbReference>
<dbReference type="Gene3D" id="3.30.470.20">
    <property type="entry name" value="ATP-grasp fold, B domain"/>
    <property type="match status" value="1"/>
</dbReference>
<dbReference type="Gene3D" id="3.30.200.20">
    <property type="entry name" value="Phosphorylase Kinase, domain 1"/>
    <property type="match status" value="1"/>
</dbReference>
<dbReference type="HAMAP" id="MF_00137">
    <property type="entry name" value="SAICAR_synth"/>
    <property type="match status" value="1"/>
</dbReference>
<dbReference type="InterPro" id="IPR028923">
    <property type="entry name" value="SAICAR_synt/ADE2_N"/>
</dbReference>
<dbReference type="InterPro" id="IPR033934">
    <property type="entry name" value="SAICAR_synt_PurC"/>
</dbReference>
<dbReference type="InterPro" id="IPR001636">
    <property type="entry name" value="SAICAR_synth"/>
</dbReference>
<dbReference type="InterPro" id="IPR050089">
    <property type="entry name" value="SAICAR_synthetase"/>
</dbReference>
<dbReference type="InterPro" id="IPR018236">
    <property type="entry name" value="SAICAR_synthetase_CS"/>
</dbReference>
<dbReference type="NCBIfam" id="TIGR00081">
    <property type="entry name" value="purC"/>
    <property type="match status" value="1"/>
</dbReference>
<dbReference type="PANTHER" id="PTHR43599">
    <property type="entry name" value="MULTIFUNCTIONAL PROTEIN ADE2"/>
    <property type="match status" value="1"/>
</dbReference>
<dbReference type="PANTHER" id="PTHR43599:SF3">
    <property type="entry name" value="SI:DKEY-6E2.2"/>
    <property type="match status" value="1"/>
</dbReference>
<dbReference type="Pfam" id="PF01259">
    <property type="entry name" value="SAICAR_synt"/>
    <property type="match status" value="1"/>
</dbReference>
<dbReference type="SUPFAM" id="SSF56104">
    <property type="entry name" value="SAICAR synthase-like"/>
    <property type="match status" value="1"/>
</dbReference>
<dbReference type="PROSITE" id="PS01057">
    <property type="entry name" value="SAICAR_SYNTHETASE_1"/>
    <property type="match status" value="1"/>
</dbReference>
<dbReference type="PROSITE" id="PS01058">
    <property type="entry name" value="SAICAR_SYNTHETASE_2"/>
    <property type="match status" value="1"/>
</dbReference>
<proteinExistence type="inferred from homology"/>